<evidence type="ECO:0000250" key="1"/>
<evidence type="ECO:0000269" key="2">
    <source>
    </source>
</evidence>
<evidence type="ECO:0000269" key="3">
    <source>
    </source>
</evidence>
<evidence type="ECO:0000269" key="4">
    <source>
    </source>
</evidence>
<evidence type="ECO:0000269" key="5">
    <source>
    </source>
</evidence>
<evidence type="ECO:0000269" key="6">
    <source>
    </source>
</evidence>
<evidence type="ECO:0000269" key="7">
    <source>
    </source>
</evidence>
<evidence type="ECO:0000303" key="8">
    <source>
    </source>
</evidence>
<evidence type="ECO:0000303" key="9">
    <source>
    </source>
</evidence>
<evidence type="ECO:0000305" key="10"/>
<evidence type="ECO:0007744" key="11">
    <source>
    </source>
</evidence>
<evidence type="ECO:0007744" key="12">
    <source>
    </source>
</evidence>
<comment type="function">
    <text evidence="6 7">Protein phosphatase that dephosphorylates AKT family kinase specifically at 'Ser-473', blocking cell cycle progression and promoting cell apoptosis. May play an inhibitory role in glucose uptake by adipocytes.</text>
</comment>
<comment type="catalytic activity">
    <reaction evidence="6">
        <text>O-phospho-L-seryl-[protein] + H2O = L-seryl-[protein] + phosphate</text>
        <dbReference type="Rhea" id="RHEA:20629"/>
        <dbReference type="Rhea" id="RHEA-COMP:9863"/>
        <dbReference type="Rhea" id="RHEA-COMP:11604"/>
        <dbReference type="ChEBI" id="CHEBI:15377"/>
        <dbReference type="ChEBI" id="CHEBI:29999"/>
        <dbReference type="ChEBI" id="CHEBI:43474"/>
        <dbReference type="ChEBI" id="CHEBI:83421"/>
        <dbReference type="EC" id="3.1.3.16"/>
    </reaction>
</comment>
<comment type="catalytic activity">
    <reaction evidence="6">
        <text>O-phospho-L-threonyl-[protein] + H2O = L-threonyl-[protein] + phosphate</text>
        <dbReference type="Rhea" id="RHEA:47004"/>
        <dbReference type="Rhea" id="RHEA-COMP:11060"/>
        <dbReference type="Rhea" id="RHEA-COMP:11605"/>
        <dbReference type="ChEBI" id="CHEBI:15377"/>
        <dbReference type="ChEBI" id="CHEBI:30013"/>
        <dbReference type="ChEBI" id="CHEBI:43474"/>
        <dbReference type="ChEBI" id="CHEBI:61977"/>
        <dbReference type="EC" id="3.1.3.16"/>
    </reaction>
</comment>
<comment type="cofactor">
    <cofactor evidence="1">
        <name>a divalent metal cation</name>
        <dbReference type="ChEBI" id="CHEBI:60240"/>
    </cofactor>
    <text evidence="1">Binds 2 divalent metal cations.</text>
</comment>
<comment type="subcellular location">
    <subcellularLocation>
        <location evidence="6">Cytoplasm</location>
    </subcellularLocation>
</comment>
<comment type="alternative products">
    <event type="alternative splicing"/>
    <isoform>
        <id>Q9BRF8-1</id>
        <name>1</name>
        <sequence type="displayed"/>
    </isoform>
    <isoform>
        <id>Q9BRF8-2</id>
        <name>2</name>
        <sequence type="described" ref="VSP_031658"/>
    </isoform>
    <isoform>
        <id>Q9BRF8-3</id>
        <name>3</name>
        <sequence type="described" ref="VSP_055218 VSP_055219"/>
    </isoform>
</comment>
<comment type="tissue specificity">
    <text evidence="7">Expressed in subcutaneous adipose tissue.</text>
</comment>
<comment type="developmental stage">
    <text evidence="7">Expression levels are slightly decreased in subcutaneous adipose tissue following weight loss. Expression levels may be not affected by preadipocyte differentiation.</text>
</comment>
<comment type="induction">
    <text evidence="4">Transactivated by the large envelope protein of the hepatitis B virus (HBV).</text>
</comment>
<comment type="similarity">
    <text evidence="10">Belongs to the metallophosphoesterase superfamily. CPPED1 family.</text>
</comment>
<proteinExistence type="evidence at protein level"/>
<accession>Q9BRF8</accession>
<accession>B4DQ68</accession>
<accession>Q6MZY9</accession>
<accession>Q9H9M9</accession>
<accession>Q9NUT6</accession>
<sequence length="314" mass="35548">MSAAEAGGVFHRARGRTLAAFPAEKESEWKGPFYFILGADPQFGLIKAWSTGDCDNGGDEWEQEIRLTEQAVQAINKLNPKPKFFVLCGDLIHAMPGKPWRTEQTEDLKRVLRAVDRAIPLVLVSGNHDIGNTPTAETVEEFCRTWGDDYFSFWVGGVLFLVLNSQFYENPSKCPSLKQAQDQWLDEQLSIARQRHCQHAIVFQHIPLFLESIDEDDDYYFNLSKSTRKKLADKFIHAGVKVVFSGHYHRNAGGTYQNLDMVVSSAIGCQLGRDPHGLRVVVVTAEKIVHRYYSLDELSEKGIEDDLMDLIKKK</sequence>
<feature type="chain" id="PRO_0000320556" description="Serine/threonine-protein phosphatase CPPED1">
    <location>
        <begin position="1"/>
        <end position="314"/>
    </location>
</feature>
<feature type="region of interest" description="Catalytic">
    <location>
        <begin position="47"/>
        <end position="250"/>
    </location>
</feature>
<feature type="binding site" evidence="1">
    <location>
        <position position="53"/>
    </location>
    <ligand>
        <name>a divalent metal cation</name>
        <dbReference type="ChEBI" id="CHEBI:60240"/>
        <label>1</label>
    </ligand>
</feature>
<feature type="binding site" evidence="1">
    <location>
        <position position="90"/>
    </location>
    <ligand>
        <name>a divalent metal cation</name>
        <dbReference type="ChEBI" id="CHEBI:60240"/>
        <label>1</label>
    </ligand>
</feature>
<feature type="binding site" evidence="1">
    <location>
        <position position="90"/>
    </location>
    <ligand>
        <name>a divalent metal cation</name>
        <dbReference type="ChEBI" id="CHEBI:60240"/>
        <label>2</label>
    </ligand>
</feature>
<feature type="binding site" evidence="1">
    <location>
        <position position="127"/>
    </location>
    <ligand>
        <name>a divalent metal cation</name>
        <dbReference type="ChEBI" id="CHEBI:60240"/>
        <label>2</label>
    </ligand>
</feature>
<feature type="binding site" evidence="1">
    <location>
        <position position="247"/>
    </location>
    <ligand>
        <name>a divalent metal cation</name>
        <dbReference type="ChEBI" id="CHEBI:60240"/>
        <label>2</label>
    </ligand>
</feature>
<feature type="modified residue" description="Phosphoserine" evidence="12">
    <location>
        <position position="2"/>
    </location>
</feature>
<feature type="modified residue" description="Phosphoserine" evidence="12">
    <location>
        <position position="294"/>
    </location>
</feature>
<feature type="splice variant" id="VSP_031658" description="In isoform 2." evidence="9">
    <location>
        <begin position="97"/>
        <end position="238"/>
    </location>
</feature>
<feature type="splice variant" id="VSP_055218" description="In isoform 3." evidence="8">
    <original>GKPWRTEQTEDLKRVLRAVDRAIPLV</original>
    <variation>AGQRPPRAPSRGGHRRENCSPILQSR</variation>
    <location>
        <begin position="97"/>
        <end position="122"/>
    </location>
</feature>
<feature type="splice variant" id="VSP_055219" description="In isoform 3." evidence="8">
    <location>
        <begin position="123"/>
        <end position="314"/>
    </location>
</feature>
<feature type="sequence variant" id="VAR_039204" description="In dbSNP:rs3748976." evidence="2 3 4">
    <original>A</original>
    <variation>D</variation>
    <location>
        <position position="19"/>
    </location>
</feature>
<feature type="sequence variant" id="VAR_039205" description="In dbSNP:rs3748980.">
    <original>V</original>
    <variation>I</variation>
    <location>
        <position position="86"/>
    </location>
</feature>
<feature type="sequence variant" id="VAR_039206" description="In dbSNP:rs1713480." evidence="2 3 4 5 11">
    <original>K</original>
    <variation>R</variation>
    <location>
        <position position="241"/>
    </location>
</feature>
<feature type="sequence variant" id="VAR_039207" description="In dbSNP:rs11645068.">
    <original>H</original>
    <variation>P</variation>
    <location>
        <position position="290"/>
    </location>
</feature>
<feature type="sequence conflict" description="In Ref. 3; CAE45887." evidence="10" ref="3">
    <original>K</original>
    <variation>R</variation>
    <location>
        <position position="47"/>
    </location>
</feature>
<feature type="sequence conflict" description="In Ref. 2; BAA92034." evidence="10" ref="2">
    <original>K</original>
    <variation>E</variation>
    <location>
        <position position="77"/>
    </location>
</feature>
<feature type="sequence conflict" description="In Ref. 2; BAB14194." evidence="10" ref="2">
    <original>D</original>
    <variation>Y</variation>
    <location>
        <position position="148"/>
    </location>
</feature>
<feature type="sequence conflict" description="In Ref. 2; BAA92034." evidence="10" ref="2">
    <original>K</original>
    <variation>E</variation>
    <location>
        <position position="230"/>
    </location>
</feature>
<gene>
    <name type="primary">CPPED1</name>
    <name type="synonym">CSTP1</name>
</gene>
<keyword id="KW-0025">Alternative splicing</keyword>
<keyword id="KW-0963">Cytoplasm</keyword>
<keyword id="KW-0378">Hydrolase</keyword>
<keyword id="KW-0479">Metal-binding</keyword>
<keyword id="KW-0597">Phosphoprotein</keyword>
<keyword id="KW-1267">Proteomics identification</keyword>
<keyword id="KW-1185">Reference proteome</keyword>
<dbReference type="EC" id="3.1.3.16"/>
<dbReference type="EMBL" id="AY553877">
    <property type="protein sequence ID" value="AAS64575.1"/>
    <property type="molecule type" value="mRNA"/>
</dbReference>
<dbReference type="EMBL" id="AK002013">
    <property type="protein sequence ID" value="BAA92034.1"/>
    <property type="molecule type" value="mRNA"/>
</dbReference>
<dbReference type="EMBL" id="AK022710">
    <property type="protein sequence ID" value="BAB14194.1"/>
    <property type="molecule type" value="mRNA"/>
</dbReference>
<dbReference type="EMBL" id="AK298662">
    <property type="protein sequence ID" value="BAG60830.1"/>
    <property type="molecule type" value="mRNA"/>
</dbReference>
<dbReference type="EMBL" id="BX640805">
    <property type="protein sequence ID" value="CAE45887.1"/>
    <property type="molecule type" value="mRNA"/>
</dbReference>
<dbReference type="EMBL" id="AC010333">
    <property type="status" value="NOT_ANNOTATED_CDS"/>
    <property type="molecule type" value="Genomic_DNA"/>
</dbReference>
<dbReference type="EMBL" id="AC092324">
    <property type="status" value="NOT_ANNOTATED_CDS"/>
    <property type="molecule type" value="Genomic_DNA"/>
</dbReference>
<dbReference type="EMBL" id="AC109597">
    <property type="status" value="NOT_ANNOTATED_CDS"/>
    <property type="molecule type" value="Genomic_DNA"/>
</dbReference>
<dbReference type="EMBL" id="BC006289">
    <property type="protein sequence ID" value="AAH06289.1"/>
    <property type="molecule type" value="mRNA"/>
</dbReference>
<dbReference type="CCDS" id="CCDS42119.1">
    <molecule id="Q9BRF8-2"/>
</dbReference>
<dbReference type="CCDS" id="CCDS42120.1">
    <molecule id="Q9BRF8-1"/>
</dbReference>
<dbReference type="RefSeq" id="NP_001092925.1">
    <molecule id="Q9BRF8-2"/>
    <property type="nucleotide sequence ID" value="NM_001099455.2"/>
</dbReference>
<dbReference type="RefSeq" id="NP_060810.2">
    <molecule id="Q9BRF8-1"/>
    <property type="nucleotide sequence ID" value="NM_018340.3"/>
</dbReference>
<dbReference type="SMR" id="Q9BRF8"/>
<dbReference type="BioGRID" id="120595">
    <property type="interactions" value="22"/>
</dbReference>
<dbReference type="FunCoup" id="Q9BRF8">
    <property type="interactions" value="312"/>
</dbReference>
<dbReference type="IntAct" id="Q9BRF8">
    <property type="interactions" value="6"/>
</dbReference>
<dbReference type="MINT" id="Q9BRF8"/>
<dbReference type="STRING" id="9606.ENSP00000371193"/>
<dbReference type="DEPOD" id="CPPED1"/>
<dbReference type="GlyGen" id="Q9BRF8">
    <property type="glycosylation" value="1 site, 1 O-linked glycan (1 site)"/>
</dbReference>
<dbReference type="iPTMnet" id="Q9BRF8"/>
<dbReference type="MetOSite" id="Q9BRF8"/>
<dbReference type="PhosphoSitePlus" id="Q9BRF8"/>
<dbReference type="SwissPalm" id="Q9BRF8"/>
<dbReference type="BioMuta" id="CPPED1"/>
<dbReference type="DMDM" id="317373448"/>
<dbReference type="jPOST" id="Q9BRF8"/>
<dbReference type="MassIVE" id="Q9BRF8"/>
<dbReference type="PaxDb" id="9606-ENSP00000371193"/>
<dbReference type="PeptideAtlas" id="Q9BRF8"/>
<dbReference type="ProteomicsDB" id="78760">
    <molecule id="Q9BRF8-1"/>
</dbReference>
<dbReference type="ProteomicsDB" id="78761">
    <molecule id="Q9BRF8-2"/>
</dbReference>
<dbReference type="Pumba" id="Q9BRF8"/>
<dbReference type="Antibodypedia" id="24789">
    <property type="antibodies" value="141 antibodies from 23 providers"/>
</dbReference>
<dbReference type="DNASU" id="55313"/>
<dbReference type="Ensembl" id="ENST00000261660.4">
    <molecule id="Q9BRF8-3"/>
    <property type="protein sequence ID" value="ENSP00000261660.4"/>
    <property type="gene ID" value="ENSG00000103381.12"/>
</dbReference>
<dbReference type="Ensembl" id="ENST00000381774.9">
    <molecule id="Q9BRF8-1"/>
    <property type="protein sequence ID" value="ENSP00000371193.4"/>
    <property type="gene ID" value="ENSG00000103381.12"/>
</dbReference>
<dbReference type="Ensembl" id="ENST00000433677.6">
    <molecule id="Q9BRF8-2"/>
    <property type="protein sequence ID" value="ENSP00000411127.2"/>
    <property type="gene ID" value="ENSG00000103381.12"/>
</dbReference>
<dbReference type="GeneID" id="55313"/>
<dbReference type="KEGG" id="hsa:55313"/>
<dbReference type="MANE-Select" id="ENST00000381774.9">
    <property type="protein sequence ID" value="ENSP00000371193.4"/>
    <property type="RefSeq nucleotide sequence ID" value="NM_018340.3"/>
    <property type="RefSeq protein sequence ID" value="NP_060810.2"/>
</dbReference>
<dbReference type="UCSC" id="uc002dca.5">
    <molecule id="Q9BRF8-1"/>
    <property type="organism name" value="human"/>
</dbReference>
<dbReference type="AGR" id="HGNC:25632"/>
<dbReference type="CTD" id="55313"/>
<dbReference type="DisGeNET" id="55313"/>
<dbReference type="GeneCards" id="CPPED1"/>
<dbReference type="HGNC" id="HGNC:25632">
    <property type="gene designation" value="CPPED1"/>
</dbReference>
<dbReference type="HPA" id="ENSG00000103381">
    <property type="expression patterns" value="Low tissue specificity"/>
</dbReference>
<dbReference type="MIM" id="615603">
    <property type="type" value="gene"/>
</dbReference>
<dbReference type="neXtProt" id="NX_Q9BRF8"/>
<dbReference type="OpenTargets" id="ENSG00000103381"/>
<dbReference type="PharmGKB" id="PA164718110"/>
<dbReference type="VEuPathDB" id="HostDB:ENSG00000103381"/>
<dbReference type="eggNOG" id="KOG1378">
    <property type="taxonomic scope" value="Eukaryota"/>
</dbReference>
<dbReference type="GeneTree" id="ENSGT00390000008676"/>
<dbReference type="HOGENOM" id="CLU_077151_0_0_1"/>
<dbReference type="InParanoid" id="Q9BRF8"/>
<dbReference type="OMA" id="NEPTHET"/>
<dbReference type="OrthoDB" id="45007at2759"/>
<dbReference type="PAN-GO" id="Q9BRF8">
    <property type="GO annotations" value="0 GO annotations based on evolutionary models"/>
</dbReference>
<dbReference type="PhylomeDB" id="Q9BRF8"/>
<dbReference type="TreeFam" id="TF329406"/>
<dbReference type="PathwayCommons" id="Q9BRF8"/>
<dbReference type="Reactome" id="R-HSA-6798695">
    <property type="pathway name" value="Neutrophil degranulation"/>
</dbReference>
<dbReference type="SignaLink" id="Q9BRF8"/>
<dbReference type="BioGRID-ORCS" id="55313">
    <property type="hits" value="7 hits in 1154 CRISPR screens"/>
</dbReference>
<dbReference type="ChiTaRS" id="CPPED1">
    <property type="organism name" value="human"/>
</dbReference>
<dbReference type="GenomeRNAi" id="55313"/>
<dbReference type="Pharos" id="Q9BRF8">
    <property type="development level" value="Tbio"/>
</dbReference>
<dbReference type="PRO" id="PR:Q9BRF8"/>
<dbReference type="Proteomes" id="UP000005640">
    <property type="component" value="Chromosome 16"/>
</dbReference>
<dbReference type="RNAct" id="Q9BRF8">
    <property type="molecule type" value="protein"/>
</dbReference>
<dbReference type="Bgee" id="ENSG00000103381">
    <property type="expression patterns" value="Expressed in monocyte and 183 other cell types or tissues"/>
</dbReference>
<dbReference type="GO" id="GO:0035578">
    <property type="term" value="C:azurophil granule lumen"/>
    <property type="evidence" value="ECO:0000304"/>
    <property type="project" value="Reactome"/>
</dbReference>
<dbReference type="GO" id="GO:0005829">
    <property type="term" value="C:cytosol"/>
    <property type="evidence" value="ECO:0000314"/>
    <property type="project" value="HPA"/>
</dbReference>
<dbReference type="GO" id="GO:0005576">
    <property type="term" value="C:extracellular region"/>
    <property type="evidence" value="ECO:0000304"/>
    <property type="project" value="Reactome"/>
</dbReference>
<dbReference type="GO" id="GO:0005886">
    <property type="term" value="C:plasma membrane"/>
    <property type="evidence" value="ECO:0000314"/>
    <property type="project" value="HPA"/>
</dbReference>
<dbReference type="GO" id="GO:0046872">
    <property type="term" value="F:metal ion binding"/>
    <property type="evidence" value="ECO:0007669"/>
    <property type="project" value="UniProtKB-KW"/>
</dbReference>
<dbReference type="GO" id="GO:0004722">
    <property type="term" value="F:protein serine/threonine phosphatase activity"/>
    <property type="evidence" value="ECO:0007669"/>
    <property type="project" value="UniProtKB-EC"/>
</dbReference>
<dbReference type="CDD" id="cd07395">
    <property type="entry name" value="MPP_CSTP1"/>
    <property type="match status" value="1"/>
</dbReference>
<dbReference type="FunFam" id="3.60.21.10:FF:000063">
    <property type="entry name" value="Calcineurin-like phosphoesterase domain-containing protein 1"/>
    <property type="match status" value="1"/>
</dbReference>
<dbReference type="Gene3D" id="3.60.21.10">
    <property type="match status" value="1"/>
</dbReference>
<dbReference type="InterPro" id="IPR004843">
    <property type="entry name" value="Calcineurin-like_PHP_ApaH"/>
</dbReference>
<dbReference type="InterPro" id="IPR029052">
    <property type="entry name" value="Metallo-depent_PP-like"/>
</dbReference>
<dbReference type="InterPro" id="IPR041867">
    <property type="entry name" value="MPP_CSTP1"/>
</dbReference>
<dbReference type="InterPro" id="IPR051918">
    <property type="entry name" value="STPP_CPPED1"/>
</dbReference>
<dbReference type="PANTHER" id="PTHR43143">
    <property type="entry name" value="METALLOPHOSPHOESTERASE, CALCINEURIN SUPERFAMILY"/>
    <property type="match status" value="1"/>
</dbReference>
<dbReference type="PANTHER" id="PTHR43143:SF1">
    <property type="entry name" value="SERINE_THREONINE-PROTEIN PHOSPHATASE CPPED1"/>
    <property type="match status" value="1"/>
</dbReference>
<dbReference type="Pfam" id="PF00149">
    <property type="entry name" value="Metallophos"/>
    <property type="match status" value="1"/>
</dbReference>
<dbReference type="SUPFAM" id="SSF56300">
    <property type="entry name" value="Metallo-dependent phosphatases"/>
    <property type="match status" value="1"/>
</dbReference>
<protein>
    <recommendedName>
        <fullName>Serine/threonine-protein phosphatase CPPED1</fullName>
        <ecNumber>3.1.3.16</ecNumber>
    </recommendedName>
    <alternativeName>
        <fullName>Calcineurin-like phosphoesterase domain-containing protein 1</fullName>
    </alternativeName>
    <alternativeName>
        <fullName>Complete S-transactivated protein 1</fullName>
    </alternativeName>
</protein>
<name>CPPED_HUMAN</name>
<organism>
    <name type="scientific">Homo sapiens</name>
    <name type="common">Human</name>
    <dbReference type="NCBI Taxonomy" id="9606"/>
    <lineage>
        <taxon>Eukaryota</taxon>
        <taxon>Metazoa</taxon>
        <taxon>Chordata</taxon>
        <taxon>Craniata</taxon>
        <taxon>Vertebrata</taxon>
        <taxon>Euteleostomi</taxon>
        <taxon>Mammalia</taxon>
        <taxon>Eutheria</taxon>
        <taxon>Euarchontoglires</taxon>
        <taxon>Primates</taxon>
        <taxon>Haplorrhini</taxon>
        <taxon>Catarrhini</taxon>
        <taxon>Hominidae</taxon>
        <taxon>Homo</taxon>
    </lineage>
</organism>
<reference key="1">
    <citation type="journal article" date="2005" name="World J. Gastroenterol.">
        <title>Transactivating effect of complete S protein of hepatitis B virus and cloning of genes transactivated by complete S protein using suppression subtractive hybridization technique.</title>
        <authorList>
            <person name="Bai G.-Q."/>
            <person name="Liu Y."/>
            <person name="Cheng J."/>
            <person name="Zhang S.-L."/>
            <person name="Yue Y.-F."/>
            <person name="Huang Y.-P."/>
            <person name="Zhang L.-Y."/>
        </authorList>
    </citation>
    <scope>NUCLEOTIDE SEQUENCE [MRNA] (ISOFORM 1)</scope>
    <scope>VARIANTS ASP-19 AND ARG-241</scope>
    <scope>INDUCTION</scope>
</reference>
<reference key="2">
    <citation type="journal article" date="2004" name="Nat. Genet.">
        <title>Complete sequencing and characterization of 21,243 full-length human cDNAs.</title>
        <authorList>
            <person name="Ota T."/>
            <person name="Suzuki Y."/>
            <person name="Nishikawa T."/>
            <person name="Otsuki T."/>
            <person name="Sugiyama T."/>
            <person name="Irie R."/>
            <person name="Wakamatsu A."/>
            <person name="Hayashi K."/>
            <person name="Sato H."/>
            <person name="Nagai K."/>
            <person name="Kimura K."/>
            <person name="Makita H."/>
            <person name="Sekine M."/>
            <person name="Obayashi M."/>
            <person name="Nishi T."/>
            <person name="Shibahara T."/>
            <person name="Tanaka T."/>
            <person name="Ishii S."/>
            <person name="Yamamoto J."/>
            <person name="Saito K."/>
            <person name="Kawai Y."/>
            <person name="Isono Y."/>
            <person name="Nakamura Y."/>
            <person name="Nagahari K."/>
            <person name="Murakami K."/>
            <person name="Yasuda T."/>
            <person name="Iwayanagi T."/>
            <person name="Wagatsuma M."/>
            <person name="Shiratori A."/>
            <person name="Sudo H."/>
            <person name="Hosoiri T."/>
            <person name="Kaku Y."/>
            <person name="Kodaira H."/>
            <person name="Kondo H."/>
            <person name="Sugawara M."/>
            <person name="Takahashi M."/>
            <person name="Kanda K."/>
            <person name="Yokoi T."/>
            <person name="Furuya T."/>
            <person name="Kikkawa E."/>
            <person name="Omura Y."/>
            <person name="Abe K."/>
            <person name="Kamihara K."/>
            <person name="Katsuta N."/>
            <person name="Sato K."/>
            <person name="Tanikawa M."/>
            <person name="Yamazaki M."/>
            <person name="Ninomiya K."/>
            <person name="Ishibashi T."/>
            <person name="Yamashita H."/>
            <person name="Murakawa K."/>
            <person name="Fujimori K."/>
            <person name="Tanai H."/>
            <person name="Kimata M."/>
            <person name="Watanabe M."/>
            <person name="Hiraoka S."/>
            <person name="Chiba Y."/>
            <person name="Ishida S."/>
            <person name="Ono Y."/>
            <person name="Takiguchi S."/>
            <person name="Watanabe S."/>
            <person name="Yosida M."/>
            <person name="Hotuta T."/>
            <person name="Kusano J."/>
            <person name="Kanehori K."/>
            <person name="Takahashi-Fujii A."/>
            <person name="Hara H."/>
            <person name="Tanase T.-O."/>
            <person name="Nomura Y."/>
            <person name="Togiya S."/>
            <person name="Komai F."/>
            <person name="Hara R."/>
            <person name="Takeuchi K."/>
            <person name="Arita M."/>
            <person name="Imose N."/>
            <person name="Musashino K."/>
            <person name="Yuuki H."/>
            <person name="Oshima A."/>
            <person name="Sasaki N."/>
            <person name="Aotsuka S."/>
            <person name="Yoshikawa Y."/>
            <person name="Matsunawa H."/>
            <person name="Ichihara T."/>
            <person name="Shiohata N."/>
            <person name="Sano S."/>
            <person name="Moriya S."/>
            <person name="Momiyama H."/>
            <person name="Satoh N."/>
            <person name="Takami S."/>
            <person name="Terashima Y."/>
            <person name="Suzuki O."/>
            <person name="Nakagawa S."/>
            <person name="Senoh A."/>
            <person name="Mizoguchi H."/>
            <person name="Goto Y."/>
            <person name="Shimizu F."/>
            <person name="Wakebe H."/>
            <person name="Hishigaki H."/>
            <person name="Watanabe T."/>
            <person name="Sugiyama A."/>
            <person name="Takemoto M."/>
            <person name="Kawakami B."/>
            <person name="Yamazaki M."/>
            <person name="Watanabe K."/>
            <person name="Kumagai A."/>
            <person name="Itakura S."/>
            <person name="Fukuzumi Y."/>
            <person name="Fujimori Y."/>
            <person name="Komiyama M."/>
            <person name="Tashiro H."/>
            <person name="Tanigami A."/>
            <person name="Fujiwara T."/>
            <person name="Ono T."/>
            <person name="Yamada K."/>
            <person name="Fujii Y."/>
            <person name="Ozaki K."/>
            <person name="Hirao M."/>
            <person name="Ohmori Y."/>
            <person name="Kawabata A."/>
            <person name="Hikiji T."/>
            <person name="Kobatake N."/>
            <person name="Inagaki H."/>
            <person name="Ikema Y."/>
            <person name="Okamoto S."/>
            <person name="Okitani R."/>
            <person name="Kawakami T."/>
            <person name="Noguchi S."/>
            <person name="Itoh T."/>
            <person name="Shigeta K."/>
            <person name="Senba T."/>
            <person name="Matsumura K."/>
            <person name="Nakajima Y."/>
            <person name="Mizuno T."/>
            <person name="Morinaga M."/>
            <person name="Sasaki M."/>
            <person name="Togashi T."/>
            <person name="Oyama M."/>
            <person name="Hata H."/>
            <person name="Watanabe M."/>
            <person name="Komatsu T."/>
            <person name="Mizushima-Sugano J."/>
            <person name="Satoh T."/>
            <person name="Shirai Y."/>
            <person name="Takahashi Y."/>
            <person name="Nakagawa K."/>
            <person name="Okumura K."/>
            <person name="Nagase T."/>
            <person name="Nomura N."/>
            <person name="Kikuchi H."/>
            <person name="Masuho Y."/>
            <person name="Yamashita R."/>
            <person name="Nakai K."/>
            <person name="Yada T."/>
            <person name="Nakamura Y."/>
            <person name="Ohara O."/>
            <person name="Isogai T."/>
            <person name="Sugano S."/>
        </authorList>
    </citation>
    <scope>NUCLEOTIDE SEQUENCE [LARGE SCALE MRNA] (ISOFORMS 1 AND 3)</scope>
    <scope>VARIANTS ASP-19 AND ARG-241</scope>
    <source>
        <tissue>Placenta</tissue>
    </source>
</reference>
<reference key="3">
    <citation type="journal article" date="2007" name="BMC Genomics">
        <title>The full-ORF clone resource of the German cDNA consortium.</title>
        <authorList>
            <person name="Bechtel S."/>
            <person name="Rosenfelder H."/>
            <person name="Duda A."/>
            <person name="Schmidt C.P."/>
            <person name="Ernst U."/>
            <person name="Wellenreuther R."/>
            <person name="Mehrle A."/>
            <person name="Schuster C."/>
            <person name="Bahr A."/>
            <person name="Bloecker H."/>
            <person name="Heubner D."/>
            <person name="Hoerlein A."/>
            <person name="Michel G."/>
            <person name="Wedler H."/>
            <person name="Koehrer K."/>
            <person name="Ottenwaelder B."/>
            <person name="Poustka A."/>
            <person name="Wiemann S."/>
            <person name="Schupp I."/>
        </authorList>
    </citation>
    <scope>NUCLEOTIDE SEQUENCE [LARGE SCALE MRNA] (ISOFORM 2)</scope>
    <scope>VARIANT ARG-241</scope>
    <source>
        <tissue>Small intestine</tissue>
    </source>
</reference>
<reference key="4">
    <citation type="journal article" date="2004" name="Nature">
        <title>The sequence and analysis of duplication-rich human chromosome 16.</title>
        <authorList>
            <person name="Martin J."/>
            <person name="Han C."/>
            <person name="Gordon L.A."/>
            <person name="Terry A."/>
            <person name="Prabhakar S."/>
            <person name="She X."/>
            <person name="Xie G."/>
            <person name="Hellsten U."/>
            <person name="Chan Y.M."/>
            <person name="Altherr M."/>
            <person name="Couronne O."/>
            <person name="Aerts A."/>
            <person name="Bajorek E."/>
            <person name="Black S."/>
            <person name="Blumer H."/>
            <person name="Branscomb E."/>
            <person name="Brown N.C."/>
            <person name="Bruno W.J."/>
            <person name="Buckingham J.M."/>
            <person name="Callen D.F."/>
            <person name="Campbell C.S."/>
            <person name="Campbell M.L."/>
            <person name="Campbell E.W."/>
            <person name="Caoile C."/>
            <person name="Challacombe J.F."/>
            <person name="Chasteen L.A."/>
            <person name="Chertkov O."/>
            <person name="Chi H.C."/>
            <person name="Christensen M."/>
            <person name="Clark L.M."/>
            <person name="Cohn J.D."/>
            <person name="Denys M."/>
            <person name="Detter J.C."/>
            <person name="Dickson M."/>
            <person name="Dimitrijevic-Bussod M."/>
            <person name="Escobar J."/>
            <person name="Fawcett J.J."/>
            <person name="Flowers D."/>
            <person name="Fotopulos D."/>
            <person name="Glavina T."/>
            <person name="Gomez M."/>
            <person name="Gonzales E."/>
            <person name="Goodstein D."/>
            <person name="Goodwin L.A."/>
            <person name="Grady D.L."/>
            <person name="Grigoriev I."/>
            <person name="Groza M."/>
            <person name="Hammon N."/>
            <person name="Hawkins T."/>
            <person name="Haydu L."/>
            <person name="Hildebrand C.E."/>
            <person name="Huang W."/>
            <person name="Israni S."/>
            <person name="Jett J."/>
            <person name="Jewett P.B."/>
            <person name="Kadner K."/>
            <person name="Kimball H."/>
            <person name="Kobayashi A."/>
            <person name="Krawczyk M.-C."/>
            <person name="Leyba T."/>
            <person name="Longmire J.L."/>
            <person name="Lopez F."/>
            <person name="Lou Y."/>
            <person name="Lowry S."/>
            <person name="Ludeman T."/>
            <person name="Manohar C.F."/>
            <person name="Mark G.A."/>
            <person name="McMurray K.L."/>
            <person name="Meincke L.J."/>
            <person name="Morgan J."/>
            <person name="Moyzis R.K."/>
            <person name="Mundt M.O."/>
            <person name="Munk A.C."/>
            <person name="Nandkeshwar R.D."/>
            <person name="Pitluck S."/>
            <person name="Pollard M."/>
            <person name="Predki P."/>
            <person name="Parson-Quintana B."/>
            <person name="Ramirez L."/>
            <person name="Rash S."/>
            <person name="Retterer J."/>
            <person name="Ricke D.O."/>
            <person name="Robinson D.L."/>
            <person name="Rodriguez A."/>
            <person name="Salamov A."/>
            <person name="Saunders E.H."/>
            <person name="Scott D."/>
            <person name="Shough T."/>
            <person name="Stallings R.L."/>
            <person name="Stalvey M."/>
            <person name="Sutherland R.D."/>
            <person name="Tapia R."/>
            <person name="Tesmer J.G."/>
            <person name="Thayer N."/>
            <person name="Thompson L.S."/>
            <person name="Tice H."/>
            <person name="Torney D.C."/>
            <person name="Tran-Gyamfi M."/>
            <person name="Tsai M."/>
            <person name="Ulanovsky L.E."/>
            <person name="Ustaszewska A."/>
            <person name="Vo N."/>
            <person name="White P.S."/>
            <person name="Williams A.L."/>
            <person name="Wills P.L."/>
            <person name="Wu J.-R."/>
            <person name="Wu K."/>
            <person name="Yang J."/>
            <person name="DeJong P."/>
            <person name="Bruce D."/>
            <person name="Doggett N.A."/>
            <person name="Deaven L."/>
            <person name="Schmutz J."/>
            <person name="Grimwood J."/>
            <person name="Richardson P."/>
            <person name="Rokhsar D.S."/>
            <person name="Eichler E.E."/>
            <person name="Gilna P."/>
            <person name="Lucas S.M."/>
            <person name="Myers R.M."/>
            <person name="Rubin E.M."/>
            <person name="Pennacchio L.A."/>
        </authorList>
    </citation>
    <scope>NUCLEOTIDE SEQUENCE [LARGE SCALE GENOMIC DNA]</scope>
</reference>
<reference key="5">
    <citation type="journal article" date="2004" name="Genome Res.">
        <title>The status, quality, and expansion of the NIH full-length cDNA project: the Mammalian Gene Collection (MGC).</title>
        <authorList>
            <consortium name="The MGC Project Team"/>
        </authorList>
    </citation>
    <scope>NUCLEOTIDE SEQUENCE [LARGE SCALE MRNA] (ISOFORM 1)</scope>
    <scope>VARIANTS ASP-19 AND ARG-241</scope>
    <source>
        <tissue>Placenta</tissue>
    </source>
</reference>
<reference key="6">
    <citation type="journal article" date="2013" name="Diabetes">
        <title>Downregulation of CPPED1 expression improves glucose metabolism in vitro in adipocytes.</title>
        <authorList>
            <person name="Vaittinen M."/>
            <person name="Kaminska D."/>
            <person name="Kakela P."/>
            <person name="Eskelinen M."/>
            <person name="Kolehmainen M."/>
            <person name="Pihlajamaki J."/>
            <person name="Uusitupa M."/>
            <person name="Pulkkinen L."/>
        </authorList>
    </citation>
    <scope>FUNCTION</scope>
    <scope>TISSUE SPECIFICITY</scope>
    <scope>DEVELOPMENTAL STAGE</scope>
</reference>
<reference key="7">
    <citation type="journal article" date="2013" name="J. Proteome Res.">
        <title>Toward a comprehensive characterization of a human cancer cell phosphoproteome.</title>
        <authorList>
            <person name="Zhou H."/>
            <person name="Di Palma S."/>
            <person name="Preisinger C."/>
            <person name="Peng M."/>
            <person name="Polat A.N."/>
            <person name="Heck A.J."/>
            <person name="Mohammed S."/>
        </authorList>
    </citation>
    <scope>PHOSPHORYLATION [LARGE SCALE ANALYSIS] AT SER-2 AND SER-294</scope>
    <scope>IDENTIFICATION BY MASS SPECTROMETRY [LARGE SCALE ANALYSIS]</scope>
    <source>
        <tissue>Erythroleukemia</tissue>
    </source>
</reference>
<reference key="8">
    <citation type="journal article" date="2013" name="PLoS ONE">
        <title>CSTP1, a novel protein phosphatase, blocks cell cycle, promotes cell apoptosis, and suppresses tumor growth of bladder cancer by directly dephosphorylating Akt at Ser473 site.</title>
        <authorList>
            <person name="Zhuo D.X."/>
            <person name="Zhang X.W."/>
            <person name="Jin B."/>
            <person name="Zhang Z."/>
            <person name="Xie B.S."/>
            <person name="Wu C.L."/>
            <person name="Gong K."/>
            <person name="Mao Z.B."/>
        </authorList>
    </citation>
    <scope>FUNCTION</scope>
    <scope>CATALYTIC ACTIVITY</scope>
    <scope>SUBCELLULAR LOCATION</scope>
</reference>
<reference key="9">
    <citation type="journal article" date="2014" name="J. Proteomics">
        <title>An enzyme assisted RP-RPLC approach for in-depth analysis of human liver phosphoproteome.</title>
        <authorList>
            <person name="Bian Y."/>
            <person name="Song C."/>
            <person name="Cheng K."/>
            <person name="Dong M."/>
            <person name="Wang F."/>
            <person name="Huang J."/>
            <person name="Sun D."/>
            <person name="Wang L."/>
            <person name="Ye M."/>
            <person name="Zou H."/>
        </authorList>
    </citation>
    <scope>IDENTIFICATION BY MASS SPECTROMETRY [LARGE SCALE ANALYSIS]</scope>
    <source>
        <tissue>Liver</tissue>
    </source>
</reference>
<reference key="10">
    <citation type="journal article" date="2011" name="BMC Syst. Biol.">
        <title>Initial characterization of the human central proteome.</title>
        <authorList>
            <person name="Burkard T.R."/>
            <person name="Planyavsky M."/>
            <person name="Kaupe I."/>
            <person name="Breitwieser F.P."/>
            <person name="Buerckstuemmer T."/>
            <person name="Bennett K.L."/>
            <person name="Superti-Furga G."/>
            <person name="Colinge J."/>
        </authorList>
    </citation>
    <scope>VARIANT [LARGE SCALE ANALYSIS] ARG-241</scope>
    <scope>IDENTIFICATION BY MASS SPECTROMETRY [LARGE SCALE ANALYSIS]</scope>
</reference>